<keyword id="KW-0479">Metal-binding</keyword>
<keyword id="KW-0520">NAD</keyword>
<keyword id="KW-0560">Oxidoreductase</keyword>
<keyword id="KW-1185">Reference proteome</keyword>
<keyword id="KW-0862">Zinc</keyword>
<feature type="chain" id="PRO_0000426803" description="Putative alcohol dehydrogenase D">
    <location>
        <begin position="1"/>
        <end position="368"/>
    </location>
</feature>
<feature type="binding site" evidence="1">
    <location>
        <position position="40"/>
    </location>
    <ligand>
        <name>Zn(2+)</name>
        <dbReference type="ChEBI" id="CHEBI:29105"/>
        <label>1</label>
        <note>catalytic</note>
    </ligand>
</feature>
<feature type="binding site" evidence="1">
    <location>
        <position position="61"/>
    </location>
    <ligand>
        <name>Zn(2+)</name>
        <dbReference type="ChEBI" id="CHEBI:29105"/>
        <label>1</label>
        <note>catalytic</note>
    </ligand>
</feature>
<feature type="binding site" evidence="1">
    <location>
        <position position="91"/>
    </location>
    <ligand>
        <name>Zn(2+)</name>
        <dbReference type="ChEBI" id="CHEBI:29105"/>
        <label>2</label>
    </ligand>
</feature>
<feature type="binding site" evidence="1">
    <location>
        <position position="94"/>
    </location>
    <ligand>
        <name>Zn(2+)</name>
        <dbReference type="ChEBI" id="CHEBI:29105"/>
        <label>2</label>
    </ligand>
</feature>
<feature type="binding site" evidence="1">
    <location>
        <position position="97"/>
    </location>
    <ligand>
        <name>Zn(2+)</name>
        <dbReference type="ChEBI" id="CHEBI:29105"/>
        <label>2</label>
    </ligand>
</feature>
<feature type="binding site" evidence="1">
    <location>
        <position position="105"/>
    </location>
    <ligand>
        <name>Zn(2+)</name>
        <dbReference type="ChEBI" id="CHEBI:29105"/>
        <label>2</label>
    </ligand>
</feature>
<feature type="binding site" evidence="1">
    <location>
        <position position="167"/>
    </location>
    <ligand>
        <name>Zn(2+)</name>
        <dbReference type="ChEBI" id="CHEBI:29105"/>
        <label>1</label>
        <note>catalytic</note>
    </ligand>
</feature>
<reference key="1">
    <citation type="journal article" date="2002" name="J. Bacteriol.">
        <title>Whole-genome comparison of Mycobacterium tuberculosis clinical and laboratory strains.</title>
        <authorList>
            <person name="Fleischmann R.D."/>
            <person name="Alland D."/>
            <person name="Eisen J.A."/>
            <person name="Carpenter L."/>
            <person name="White O."/>
            <person name="Peterson J.D."/>
            <person name="DeBoy R.T."/>
            <person name="Dodson R.J."/>
            <person name="Gwinn M.L."/>
            <person name="Haft D.H."/>
            <person name="Hickey E.K."/>
            <person name="Kolonay J.F."/>
            <person name="Nelson W.C."/>
            <person name="Umayam L.A."/>
            <person name="Ermolaeva M.D."/>
            <person name="Salzberg S.L."/>
            <person name="Delcher A."/>
            <person name="Utterback T.R."/>
            <person name="Weidman J.F."/>
            <person name="Khouri H.M."/>
            <person name="Gill J."/>
            <person name="Mikula A."/>
            <person name="Bishai W."/>
            <person name="Jacobs W.R. Jr."/>
            <person name="Venter J.C."/>
            <person name="Fraser C.M."/>
        </authorList>
    </citation>
    <scope>NUCLEOTIDE SEQUENCE [LARGE SCALE GENOMIC DNA]</scope>
    <source>
        <strain>CDC 1551 / Oshkosh</strain>
    </source>
</reference>
<dbReference type="EC" id="1.1.1.1"/>
<dbReference type="EMBL" id="AE000516">
    <property type="protein sequence ID" value="AAK47507.1"/>
    <property type="molecule type" value="Genomic_DNA"/>
</dbReference>
<dbReference type="PIR" id="B70853">
    <property type="entry name" value="B70853"/>
</dbReference>
<dbReference type="RefSeq" id="WP_003416075.1">
    <property type="nucleotide sequence ID" value="NZ_KK341227.1"/>
</dbReference>
<dbReference type="SMR" id="P9WQB8"/>
<dbReference type="KEGG" id="mtc:MT3171"/>
<dbReference type="PATRIC" id="fig|83331.31.peg.3417"/>
<dbReference type="HOGENOM" id="CLU_026673_14_1_11"/>
<dbReference type="Proteomes" id="UP000001020">
    <property type="component" value="Chromosome"/>
</dbReference>
<dbReference type="GO" id="GO:0005829">
    <property type="term" value="C:cytosol"/>
    <property type="evidence" value="ECO:0007669"/>
    <property type="project" value="TreeGrafter"/>
</dbReference>
<dbReference type="GO" id="GO:0004022">
    <property type="term" value="F:alcohol dehydrogenase (NAD+) activity"/>
    <property type="evidence" value="ECO:0007669"/>
    <property type="project" value="UniProtKB-EC"/>
</dbReference>
<dbReference type="GO" id="GO:0051903">
    <property type="term" value="F:S-(hydroxymethyl)glutathione dehydrogenase [NAD(P)+] activity"/>
    <property type="evidence" value="ECO:0007669"/>
    <property type="project" value="TreeGrafter"/>
</dbReference>
<dbReference type="GO" id="GO:0008270">
    <property type="term" value="F:zinc ion binding"/>
    <property type="evidence" value="ECO:0007669"/>
    <property type="project" value="InterPro"/>
</dbReference>
<dbReference type="GO" id="GO:0046294">
    <property type="term" value="P:formaldehyde catabolic process"/>
    <property type="evidence" value="ECO:0007669"/>
    <property type="project" value="TreeGrafter"/>
</dbReference>
<dbReference type="CDD" id="cd08279">
    <property type="entry name" value="Zn_ADH_class_III"/>
    <property type="match status" value="1"/>
</dbReference>
<dbReference type="FunFam" id="3.40.50.720:FF:000482">
    <property type="entry name" value="Alcohol dehydrogenase D"/>
    <property type="match status" value="1"/>
</dbReference>
<dbReference type="Gene3D" id="3.90.180.10">
    <property type="entry name" value="Medium-chain alcohol dehydrogenases, catalytic domain"/>
    <property type="match status" value="1"/>
</dbReference>
<dbReference type="Gene3D" id="3.40.50.720">
    <property type="entry name" value="NAD(P)-binding Rossmann-like Domain"/>
    <property type="match status" value="1"/>
</dbReference>
<dbReference type="InterPro" id="IPR013149">
    <property type="entry name" value="ADH-like_C"/>
</dbReference>
<dbReference type="InterPro" id="IPR013154">
    <property type="entry name" value="ADH-like_N"/>
</dbReference>
<dbReference type="InterPro" id="IPR023921">
    <property type="entry name" value="ADH_Zn_actinomycetes"/>
</dbReference>
<dbReference type="InterPro" id="IPR002328">
    <property type="entry name" value="ADH_Zn_CS"/>
</dbReference>
<dbReference type="InterPro" id="IPR011032">
    <property type="entry name" value="GroES-like_sf"/>
</dbReference>
<dbReference type="InterPro" id="IPR036291">
    <property type="entry name" value="NAD(P)-bd_dom_sf"/>
</dbReference>
<dbReference type="InterPro" id="IPR020843">
    <property type="entry name" value="PKS_ER"/>
</dbReference>
<dbReference type="NCBIfam" id="TIGR03989">
    <property type="entry name" value="Rxyl_3153"/>
    <property type="match status" value="1"/>
</dbReference>
<dbReference type="PANTHER" id="PTHR43880">
    <property type="entry name" value="ALCOHOL DEHYDROGENASE"/>
    <property type="match status" value="1"/>
</dbReference>
<dbReference type="PANTHER" id="PTHR43880:SF12">
    <property type="entry name" value="ALCOHOL DEHYDROGENASE CLASS-3"/>
    <property type="match status" value="1"/>
</dbReference>
<dbReference type="Pfam" id="PF08240">
    <property type="entry name" value="ADH_N"/>
    <property type="match status" value="1"/>
</dbReference>
<dbReference type="Pfam" id="PF00107">
    <property type="entry name" value="ADH_zinc_N"/>
    <property type="match status" value="1"/>
</dbReference>
<dbReference type="SMART" id="SM00829">
    <property type="entry name" value="PKS_ER"/>
    <property type="match status" value="1"/>
</dbReference>
<dbReference type="SUPFAM" id="SSF50129">
    <property type="entry name" value="GroES-like"/>
    <property type="match status" value="2"/>
</dbReference>
<dbReference type="SUPFAM" id="SSF51735">
    <property type="entry name" value="NAD(P)-binding Rossmann-fold domains"/>
    <property type="match status" value="1"/>
</dbReference>
<dbReference type="PROSITE" id="PS00059">
    <property type="entry name" value="ADH_ZINC"/>
    <property type="match status" value="1"/>
</dbReference>
<proteinExistence type="inferred from homology"/>
<protein>
    <recommendedName>
        <fullName>Putative alcohol dehydrogenase D</fullName>
        <ecNumber>1.1.1.1</ecNumber>
    </recommendedName>
</protein>
<gene>
    <name type="primary">adhD</name>
    <name type="ordered locus">MT3171</name>
</gene>
<comment type="function">
    <text evidence="1">Required for maintaining the appropriate mycolic acid composition and permeability of the envelope on its exposure to acidic pH.</text>
</comment>
<comment type="catalytic activity">
    <reaction>
        <text>a primary alcohol + NAD(+) = an aldehyde + NADH + H(+)</text>
        <dbReference type="Rhea" id="RHEA:10736"/>
        <dbReference type="ChEBI" id="CHEBI:15378"/>
        <dbReference type="ChEBI" id="CHEBI:15734"/>
        <dbReference type="ChEBI" id="CHEBI:17478"/>
        <dbReference type="ChEBI" id="CHEBI:57540"/>
        <dbReference type="ChEBI" id="CHEBI:57945"/>
        <dbReference type="EC" id="1.1.1.1"/>
    </reaction>
</comment>
<comment type="catalytic activity">
    <reaction>
        <text>a secondary alcohol + NAD(+) = a ketone + NADH + H(+)</text>
        <dbReference type="Rhea" id="RHEA:10740"/>
        <dbReference type="ChEBI" id="CHEBI:15378"/>
        <dbReference type="ChEBI" id="CHEBI:17087"/>
        <dbReference type="ChEBI" id="CHEBI:35681"/>
        <dbReference type="ChEBI" id="CHEBI:57540"/>
        <dbReference type="ChEBI" id="CHEBI:57945"/>
        <dbReference type="EC" id="1.1.1.1"/>
    </reaction>
</comment>
<comment type="cofactor">
    <cofactor evidence="1">
        <name>Zn(2+)</name>
        <dbReference type="ChEBI" id="CHEBI:29105"/>
    </cofactor>
    <text evidence="1">Binds 2 Zn(2+) ions per subunit.</text>
</comment>
<comment type="similarity">
    <text evidence="2">Belongs to the zinc-containing alcohol dehydrogenase family.</text>
</comment>
<accession>P9WQB8</accession>
<accession>F2GNY2</accession>
<accession>L0TD46</accession>
<accession>O53303</accession>
<accession>Q7D655</accession>
<organism>
    <name type="scientific">Mycobacterium tuberculosis (strain CDC 1551 / Oshkosh)</name>
    <dbReference type="NCBI Taxonomy" id="83331"/>
    <lineage>
        <taxon>Bacteria</taxon>
        <taxon>Bacillati</taxon>
        <taxon>Actinomycetota</taxon>
        <taxon>Actinomycetes</taxon>
        <taxon>Mycobacteriales</taxon>
        <taxon>Mycobacteriaceae</taxon>
        <taxon>Mycobacterium</taxon>
        <taxon>Mycobacterium tuberculosis complex</taxon>
    </lineage>
</organism>
<name>ADHD_MYCTO</name>
<sequence>MKTTAAVLFEAGKPFELMELDLDGPGPGEVLVKYTAAGLCHSDLHLTDGDLPPRFPIVGGHEGSGVIEEVGAGVTRVKPGDHVVCSFIPNCGTCRYCCTGRQNLCDMGATILEGCMPDGSFRFHSQGTDFGAMCMLGTFAERATVSQHSVVKVDDWLPLETAVLVGCGVPSGWGTAVNAGNLRAGDTAVIYGVGGLGINAVQGATAAGCKYVVVVDPVAFKRETALKFGATHAFADAASAAAKVDELTWGQGADAALILVGTVDDEVVSAATAVIGKGGTVVITGLADPAKLTVHVSGTDLTLHEKTIKGSLFGSCNPQYDIVRLLRLYDAGQLMLDELVTTTYNLEQVNQGYQDLRDGKNIRGVIVH</sequence>
<evidence type="ECO:0000250" key="1"/>
<evidence type="ECO:0000305" key="2"/>